<reference key="1">
    <citation type="submission" date="2008-05" db="EMBL/GenBank/DDBJ databases">
        <title>Genome sequence of Helicobacter pylori from the remote Amazon: traces of Asian ancestry of the first Americans.</title>
        <authorList>
            <person name="Kersulyte D."/>
            <person name="Kalia A."/>
            <person name="Gilman R.H."/>
            <person name="Berg D.E."/>
        </authorList>
    </citation>
    <scope>NUCLEOTIDE SEQUENCE [LARGE SCALE GENOMIC DNA]</scope>
    <source>
        <strain>Shi470</strain>
    </source>
</reference>
<accession>B2UUV8</accession>
<evidence type="ECO:0000250" key="1"/>
<evidence type="ECO:0000255" key="2">
    <source>
        <dbReference type="HAMAP-Rule" id="MF_00403"/>
    </source>
</evidence>
<evidence type="ECO:0000256" key="3">
    <source>
        <dbReference type="SAM" id="MobiDB-lite"/>
    </source>
</evidence>
<evidence type="ECO:0000305" key="4"/>
<gene>
    <name evidence="2" type="primary">rpsL</name>
    <name type="ordered locus">HPSH_06190</name>
</gene>
<dbReference type="EMBL" id="CP001072">
    <property type="protein sequence ID" value="ACD48640.1"/>
    <property type="molecule type" value="Genomic_DNA"/>
</dbReference>
<dbReference type="RefSeq" id="WP_001142321.1">
    <property type="nucleotide sequence ID" value="NC_010698.2"/>
</dbReference>
<dbReference type="SMR" id="B2UUV8"/>
<dbReference type="GeneID" id="93237675"/>
<dbReference type="KEGG" id="hps:HPSH_06190"/>
<dbReference type="HOGENOM" id="CLU_104295_1_2_7"/>
<dbReference type="GO" id="GO:0015935">
    <property type="term" value="C:small ribosomal subunit"/>
    <property type="evidence" value="ECO:0007669"/>
    <property type="project" value="InterPro"/>
</dbReference>
<dbReference type="GO" id="GO:0019843">
    <property type="term" value="F:rRNA binding"/>
    <property type="evidence" value="ECO:0007669"/>
    <property type="project" value="UniProtKB-UniRule"/>
</dbReference>
<dbReference type="GO" id="GO:0003735">
    <property type="term" value="F:structural constituent of ribosome"/>
    <property type="evidence" value="ECO:0007669"/>
    <property type="project" value="InterPro"/>
</dbReference>
<dbReference type="GO" id="GO:0000049">
    <property type="term" value="F:tRNA binding"/>
    <property type="evidence" value="ECO:0007669"/>
    <property type="project" value="UniProtKB-UniRule"/>
</dbReference>
<dbReference type="GO" id="GO:0006412">
    <property type="term" value="P:translation"/>
    <property type="evidence" value="ECO:0007669"/>
    <property type="project" value="UniProtKB-UniRule"/>
</dbReference>
<dbReference type="CDD" id="cd03368">
    <property type="entry name" value="Ribosomal_S12"/>
    <property type="match status" value="1"/>
</dbReference>
<dbReference type="FunFam" id="2.40.50.140:FF:000001">
    <property type="entry name" value="30S ribosomal protein S12"/>
    <property type="match status" value="1"/>
</dbReference>
<dbReference type="Gene3D" id="2.40.50.140">
    <property type="entry name" value="Nucleic acid-binding proteins"/>
    <property type="match status" value="1"/>
</dbReference>
<dbReference type="HAMAP" id="MF_00403_B">
    <property type="entry name" value="Ribosomal_uS12_B"/>
    <property type="match status" value="1"/>
</dbReference>
<dbReference type="InterPro" id="IPR012340">
    <property type="entry name" value="NA-bd_OB-fold"/>
</dbReference>
<dbReference type="InterPro" id="IPR006032">
    <property type="entry name" value="Ribosomal_uS12"/>
</dbReference>
<dbReference type="InterPro" id="IPR005679">
    <property type="entry name" value="Ribosomal_uS12_bac"/>
</dbReference>
<dbReference type="NCBIfam" id="TIGR00981">
    <property type="entry name" value="rpsL_bact"/>
    <property type="match status" value="1"/>
</dbReference>
<dbReference type="PANTHER" id="PTHR11652">
    <property type="entry name" value="30S RIBOSOMAL PROTEIN S12 FAMILY MEMBER"/>
    <property type="match status" value="1"/>
</dbReference>
<dbReference type="Pfam" id="PF00164">
    <property type="entry name" value="Ribosom_S12_S23"/>
    <property type="match status" value="1"/>
</dbReference>
<dbReference type="PIRSF" id="PIRSF002133">
    <property type="entry name" value="Ribosomal_S12/S23"/>
    <property type="match status" value="1"/>
</dbReference>
<dbReference type="PRINTS" id="PR01034">
    <property type="entry name" value="RIBOSOMALS12"/>
</dbReference>
<dbReference type="SUPFAM" id="SSF50249">
    <property type="entry name" value="Nucleic acid-binding proteins"/>
    <property type="match status" value="1"/>
</dbReference>
<dbReference type="PROSITE" id="PS00055">
    <property type="entry name" value="RIBOSOMAL_S12"/>
    <property type="match status" value="1"/>
</dbReference>
<organism>
    <name type="scientific">Helicobacter pylori (strain Shi470)</name>
    <dbReference type="NCBI Taxonomy" id="512562"/>
    <lineage>
        <taxon>Bacteria</taxon>
        <taxon>Pseudomonadati</taxon>
        <taxon>Campylobacterota</taxon>
        <taxon>Epsilonproteobacteria</taxon>
        <taxon>Campylobacterales</taxon>
        <taxon>Helicobacteraceae</taxon>
        <taxon>Helicobacter</taxon>
    </lineage>
</organism>
<sequence>MPTINQLIRKERKKVVKKTKSPALVECPQRRGVCTRVYTTTPKKPNSALRKVAKVRLTSKFEVISYIPGEGHNLQEHSIVLVRGGRVKDLPGVKYHIVRGALDTAGVNKRTVSRSKYGTKKAKATDKKATDNKKK</sequence>
<keyword id="KW-0488">Methylation</keyword>
<keyword id="KW-0687">Ribonucleoprotein</keyword>
<keyword id="KW-0689">Ribosomal protein</keyword>
<keyword id="KW-0694">RNA-binding</keyword>
<keyword id="KW-0699">rRNA-binding</keyword>
<keyword id="KW-0820">tRNA-binding</keyword>
<feature type="chain" id="PRO_1000194177" description="Small ribosomal subunit protein uS12">
    <location>
        <begin position="1"/>
        <end position="135"/>
    </location>
</feature>
<feature type="region of interest" description="Disordered" evidence="3">
    <location>
        <begin position="108"/>
        <end position="135"/>
    </location>
</feature>
<feature type="compositionally biased region" description="Basic residues" evidence="3">
    <location>
        <begin position="111"/>
        <end position="122"/>
    </location>
</feature>
<feature type="compositionally biased region" description="Basic and acidic residues" evidence="3">
    <location>
        <begin position="123"/>
        <end position="135"/>
    </location>
</feature>
<feature type="modified residue" description="3-methylthioaspartic acid" evidence="1">
    <location>
        <position position="89"/>
    </location>
</feature>
<name>RS12_HELPS</name>
<comment type="function">
    <text evidence="2">With S4 and S5 plays an important role in translational accuracy.</text>
</comment>
<comment type="function">
    <text evidence="2">Interacts with and stabilizes bases of the 16S rRNA that are involved in tRNA selection in the A site and with the mRNA backbone. Located at the interface of the 30S and 50S subunits, it traverses the body of the 30S subunit contacting proteins on the other side and probably holding the rRNA structure together. The combined cluster of proteins S8, S12 and S17 appears to hold together the shoulder and platform of the 30S subunit.</text>
</comment>
<comment type="subunit">
    <text evidence="2">Part of the 30S ribosomal subunit. Contacts proteins S8 and S17. May interact with IF1 in the 30S initiation complex.</text>
</comment>
<comment type="similarity">
    <text evidence="2">Belongs to the universal ribosomal protein uS12 family.</text>
</comment>
<protein>
    <recommendedName>
        <fullName evidence="2">Small ribosomal subunit protein uS12</fullName>
    </recommendedName>
    <alternativeName>
        <fullName evidence="4">30S ribosomal protein S12</fullName>
    </alternativeName>
</protein>
<proteinExistence type="inferred from homology"/>